<comment type="function">
    <text evidence="1">Could be involved in insertion of integral membrane proteins into the membrane.</text>
</comment>
<comment type="subcellular location">
    <subcellularLocation>
        <location evidence="1">Cell inner membrane</location>
        <topology evidence="1">Peripheral membrane protein</topology>
        <orientation evidence="1">Cytoplasmic side</orientation>
    </subcellularLocation>
</comment>
<comment type="similarity">
    <text evidence="1">Belongs to the UPF0161 family.</text>
</comment>
<feature type="chain" id="PRO_0000253141" description="Putative membrane protein insertion efficiency factor">
    <location>
        <begin position="1"/>
        <end position="79"/>
    </location>
</feature>
<organism>
    <name type="scientific">Prochlorococcus marinus (strain NATL2A)</name>
    <dbReference type="NCBI Taxonomy" id="59920"/>
    <lineage>
        <taxon>Bacteria</taxon>
        <taxon>Bacillati</taxon>
        <taxon>Cyanobacteriota</taxon>
        <taxon>Cyanophyceae</taxon>
        <taxon>Synechococcales</taxon>
        <taxon>Prochlorococcaceae</taxon>
        <taxon>Prochlorococcus</taxon>
    </lineage>
</organism>
<protein>
    <recommendedName>
        <fullName evidence="1">Putative membrane protein insertion efficiency factor</fullName>
    </recommendedName>
</protein>
<proteinExistence type="inferred from homology"/>
<evidence type="ECO:0000255" key="1">
    <source>
        <dbReference type="HAMAP-Rule" id="MF_00386"/>
    </source>
</evidence>
<sequence length="79" mass="8806">MLTKINKAIALVFVSLISFYQKWISPLFGPSCRFIPSCSAYGIEAVNKHGPWRGGWLTLKRLSKCHPLTPCGCDPVPEK</sequence>
<reference key="1">
    <citation type="journal article" date="2007" name="PLoS Genet.">
        <title>Patterns and implications of gene gain and loss in the evolution of Prochlorococcus.</title>
        <authorList>
            <person name="Kettler G.C."/>
            <person name="Martiny A.C."/>
            <person name="Huang K."/>
            <person name="Zucker J."/>
            <person name="Coleman M.L."/>
            <person name="Rodrigue S."/>
            <person name="Chen F."/>
            <person name="Lapidus A."/>
            <person name="Ferriera S."/>
            <person name="Johnson J."/>
            <person name="Steglich C."/>
            <person name="Church G.M."/>
            <person name="Richardson P."/>
            <person name="Chisholm S.W."/>
        </authorList>
    </citation>
    <scope>NUCLEOTIDE SEQUENCE [LARGE SCALE GENOMIC DNA]</scope>
    <source>
        <strain>NATL2A</strain>
    </source>
</reference>
<gene>
    <name type="ordered locus">PMN2A_1745</name>
</gene>
<keyword id="KW-0997">Cell inner membrane</keyword>
<keyword id="KW-1003">Cell membrane</keyword>
<keyword id="KW-0472">Membrane</keyword>
<keyword id="KW-1185">Reference proteome</keyword>
<accession>Q46LZ8</accession>
<name>YIDD_PROMT</name>
<dbReference type="EMBL" id="CP000095">
    <property type="protein sequence ID" value="AAZ59233.1"/>
    <property type="molecule type" value="Genomic_DNA"/>
</dbReference>
<dbReference type="RefSeq" id="WP_011294378.1">
    <property type="nucleotide sequence ID" value="NC_007335.2"/>
</dbReference>
<dbReference type="STRING" id="59920.PMN2A_1745"/>
<dbReference type="KEGG" id="pmn:PMN2A_1745"/>
<dbReference type="HOGENOM" id="CLU_144811_5_2_3"/>
<dbReference type="OrthoDB" id="9801753at2"/>
<dbReference type="PhylomeDB" id="Q46LZ8"/>
<dbReference type="Proteomes" id="UP000002535">
    <property type="component" value="Chromosome"/>
</dbReference>
<dbReference type="GO" id="GO:0005886">
    <property type="term" value="C:plasma membrane"/>
    <property type="evidence" value="ECO:0007669"/>
    <property type="project" value="UniProtKB-SubCell"/>
</dbReference>
<dbReference type="HAMAP" id="MF_00386">
    <property type="entry name" value="UPF0161_YidD"/>
    <property type="match status" value="1"/>
</dbReference>
<dbReference type="InterPro" id="IPR002696">
    <property type="entry name" value="Membr_insert_effic_factor_YidD"/>
</dbReference>
<dbReference type="NCBIfam" id="TIGR00278">
    <property type="entry name" value="membrane protein insertion efficiency factor YidD"/>
    <property type="match status" value="1"/>
</dbReference>
<dbReference type="PANTHER" id="PTHR33383">
    <property type="entry name" value="MEMBRANE PROTEIN INSERTION EFFICIENCY FACTOR-RELATED"/>
    <property type="match status" value="1"/>
</dbReference>
<dbReference type="PANTHER" id="PTHR33383:SF1">
    <property type="entry name" value="MEMBRANE PROTEIN INSERTION EFFICIENCY FACTOR-RELATED"/>
    <property type="match status" value="1"/>
</dbReference>
<dbReference type="Pfam" id="PF01809">
    <property type="entry name" value="YidD"/>
    <property type="match status" value="1"/>
</dbReference>
<dbReference type="SMART" id="SM01234">
    <property type="entry name" value="Haemolytic"/>
    <property type="match status" value="1"/>
</dbReference>